<protein>
    <recommendedName>
        <fullName evidence="2">Ribosomal protein uL24-like</fullName>
    </recommendedName>
    <alternativeName>
        <fullName>60S ribosomal protein L26-like 1</fullName>
    </alternativeName>
    <alternativeName>
        <fullName>Large ribosomal subunit protein uL24-like 1</fullName>
    </alternativeName>
</protein>
<sequence length="145" mass="17256">MKFNPFVTSDRSKNRKRHFNAPSHVRRKIMSSPLSKELRQKYNVRSMPIRKDDEVQVVRGHYKGQQIGKVVQVYRKKYVIYIERVQREKANGTTVHVGIHPSKVVITRLKLDKDRKKILERKAKSRQVGKEKGKYKEELIEKMQE</sequence>
<proteinExistence type="evidence at protein level"/>
<keyword id="KW-0903">Direct protein sequencing</keyword>
<keyword id="KW-1017">Isopeptide bond</keyword>
<keyword id="KW-1267">Proteomics identification</keyword>
<keyword id="KW-1185">Reference proteome</keyword>
<keyword id="KW-0687">Ribonucleoprotein</keyword>
<keyword id="KW-0689">Ribosomal protein</keyword>
<keyword id="KW-0832">Ubl conjugation</keyword>
<comment type="interaction">
    <interactant intactId="EBI-2949703">
        <id>Q9UNX3</id>
    </interactant>
    <interactant intactId="EBI-466029">
        <id>P42858</id>
        <label>HTT</label>
    </interactant>
    <organismsDiffer>false</organismsDiffer>
    <experiments>3</experiments>
</comment>
<comment type="similarity">
    <text evidence="2">Belongs to the universal ribosomal protein uL24 family.</text>
</comment>
<reference key="1">
    <citation type="journal article" date="2000" name="Genome Res.">
        <title>Cloning and functional analysis of cDNAs with open reading frames for 300 previously undefined genes expressed in CD34+ hematopoietic stem/progenitor cells.</title>
        <authorList>
            <person name="Zhang Q.-H."/>
            <person name="Ye M."/>
            <person name="Wu X.-Y."/>
            <person name="Ren S.-X."/>
            <person name="Zhao M."/>
            <person name="Zhao C.-J."/>
            <person name="Fu G."/>
            <person name="Shen Y."/>
            <person name="Fan H.-Y."/>
            <person name="Lu G."/>
            <person name="Zhong M."/>
            <person name="Xu X.-R."/>
            <person name="Han Z.-G."/>
            <person name="Zhang J.-W."/>
            <person name="Tao J."/>
            <person name="Huang Q.-H."/>
            <person name="Zhou J."/>
            <person name="Hu G.-X."/>
            <person name="Gu J."/>
            <person name="Chen S.-J."/>
            <person name="Chen Z."/>
        </authorList>
    </citation>
    <scope>NUCLEOTIDE SEQUENCE [LARGE SCALE MRNA]</scope>
    <source>
        <tissue>Umbilical cord blood</tissue>
    </source>
</reference>
<reference key="2">
    <citation type="journal article" date="2004" name="Nat. Genet.">
        <title>Complete sequencing and characterization of 21,243 full-length human cDNAs.</title>
        <authorList>
            <person name="Ota T."/>
            <person name="Suzuki Y."/>
            <person name="Nishikawa T."/>
            <person name="Otsuki T."/>
            <person name="Sugiyama T."/>
            <person name="Irie R."/>
            <person name="Wakamatsu A."/>
            <person name="Hayashi K."/>
            <person name="Sato H."/>
            <person name="Nagai K."/>
            <person name="Kimura K."/>
            <person name="Makita H."/>
            <person name="Sekine M."/>
            <person name="Obayashi M."/>
            <person name="Nishi T."/>
            <person name="Shibahara T."/>
            <person name="Tanaka T."/>
            <person name="Ishii S."/>
            <person name="Yamamoto J."/>
            <person name="Saito K."/>
            <person name="Kawai Y."/>
            <person name="Isono Y."/>
            <person name="Nakamura Y."/>
            <person name="Nagahari K."/>
            <person name="Murakami K."/>
            <person name="Yasuda T."/>
            <person name="Iwayanagi T."/>
            <person name="Wagatsuma M."/>
            <person name="Shiratori A."/>
            <person name="Sudo H."/>
            <person name="Hosoiri T."/>
            <person name="Kaku Y."/>
            <person name="Kodaira H."/>
            <person name="Kondo H."/>
            <person name="Sugawara M."/>
            <person name="Takahashi M."/>
            <person name="Kanda K."/>
            <person name="Yokoi T."/>
            <person name="Furuya T."/>
            <person name="Kikkawa E."/>
            <person name="Omura Y."/>
            <person name="Abe K."/>
            <person name="Kamihara K."/>
            <person name="Katsuta N."/>
            <person name="Sato K."/>
            <person name="Tanikawa M."/>
            <person name="Yamazaki M."/>
            <person name="Ninomiya K."/>
            <person name="Ishibashi T."/>
            <person name="Yamashita H."/>
            <person name="Murakawa K."/>
            <person name="Fujimori K."/>
            <person name="Tanai H."/>
            <person name="Kimata M."/>
            <person name="Watanabe M."/>
            <person name="Hiraoka S."/>
            <person name="Chiba Y."/>
            <person name="Ishida S."/>
            <person name="Ono Y."/>
            <person name="Takiguchi S."/>
            <person name="Watanabe S."/>
            <person name="Yosida M."/>
            <person name="Hotuta T."/>
            <person name="Kusano J."/>
            <person name="Kanehori K."/>
            <person name="Takahashi-Fujii A."/>
            <person name="Hara H."/>
            <person name="Tanase T.-O."/>
            <person name="Nomura Y."/>
            <person name="Togiya S."/>
            <person name="Komai F."/>
            <person name="Hara R."/>
            <person name="Takeuchi K."/>
            <person name="Arita M."/>
            <person name="Imose N."/>
            <person name="Musashino K."/>
            <person name="Yuuki H."/>
            <person name="Oshima A."/>
            <person name="Sasaki N."/>
            <person name="Aotsuka S."/>
            <person name="Yoshikawa Y."/>
            <person name="Matsunawa H."/>
            <person name="Ichihara T."/>
            <person name="Shiohata N."/>
            <person name="Sano S."/>
            <person name="Moriya S."/>
            <person name="Momiyama H."/>
            <person name="Satoh N."/>
            <person name="Takami S."/>
            <person name="Terashima Y."/>
            <person name="Suzuki O."/>
            <person name="Nakagawa S."/>
            <person name="Senoh A."/>
            <person name="Mizoguchi H."/>
            <person name="Goto Y."/>
            <person name="Shimizu F."/>
            <person name="Wakebe H."/>
            <person name="Hishigaki H."/>
            <person name="Watanabe T."/>
            <person name="Sugiyama A."/>
            <person name="Takemoto M."/>
            <person name="Kawakami B."/>
            <person name="Yamazaki M."/>
            <person name="Watanabe K."/>
            <person name="Kumagai A."/>
            <person name="Itakura S."/>
            <person name="Fukuzumi Y."/>
            <person name="Fujimori Y."/>
            <person name="Komiyama M."/>
            <person name="Tashiro H."/>
            <person name="Tanigami A."/>
            <person name="Fujiwara T."/>
            <person name="Ono T."/>
            <person name="Yamada K."/>
            <person name="Fujii Y."/>
            <person name="Ozaki K."/>
            <person name="Hirao M."/>
            <person name="Ohmori Y."/>
            <person name="Kawabata A."/>
            <person name="Hikiji T."/>
            <person name="Kobatake N."/>
            <person name="Inagaki H."/>
            <person name="Ikema Y."/>
            <person name="Okamoto S."/>
            <person name="Okitani R."/>
            <person name="Kawakami T."/>
            <person name="Noguchi S."/>
            <person name="Itoh T."/>
            <person name="Shigeta K."/>
            <person name="Senba T."/>
            <person name="Matsumura K."/>
            <person name="Nakajima Y."/>
            <person name="Mizuno T."/>
            <person name="Morinaga M."/>
            <person name="Sasaki M."/>
            <person name="Togashi T."/>
            <person name="Oyama M."/>
            <person name="Hata H."/>
            <person name="Watanabe M."/>
            <person name="Komatsu T."/>
            <person name="Mizushima-Sugano J."/>
            <person name="Satoh T."/>
            <person name="Shirai Y."/>
            <person name="Takahashi Y."/>
            <person name="Nakagawa K."/>
            <person name="Okumura K."/>
            <person name="Nagase T."/>
            <person name="Nomura N."/>
            <person name="Kikuchi H."/>
            <person name="Masuho Y."/>
            <person name="Yamashita R."/>
            <person name="Nakai K."/>
            <person name="Yada T."/>
            <person name="Nakamura Y."/>
            <person name="Ohara O."/>
            <person name="Isogai T."/>
            <person name="Sugano S."/>
        </authorList>
    </citation>
    <scope>NUCLEOTIDE SEQUENCE [LARGE SCALE MRNA]</scope>
    <source>
        <tissue>Cerebellum</tissue>
    </source>
</reference>
<reference key="3">
    <citation type="submission" date="2005-09" db="EMBL/GenBank/DDBJ databases">
        <authorList>
            <person name="Mural R.J."/>
            <person name="Istrail S."/>
            <person name="Sutton G.G."/>
            <person name="Florea L."/>
            <person name="Halpern A.L."/>
            <person name="Mobarry C.M."/>
            <person name="Lippert R."/>
            <person name="Walenz B."/>
            <person name="Shatkay H."/>
            <person name="Dew I."/>
            <person name="Miller J.R."/>
            <person name="Flanigan M.J."/>
            <person name="Edwards N.J."/>
            <person name="Bolanos R."/>
            <person name="Fasulo D."/>
            <person name="Halldorsson B.V."/>
            <person name="Hannenhalli S."/>
            <person name="Turner R."/>
            <person name="Yooseph S."/>
            <person name="Lu F."/>
            <person name="Nusskern D.R."/>
            <person name="Shue B.C."/>
            <person name="Zheng X.H."/>
            <person name="Zhong F."/>
            <person name="Delcher A.L."/>
            <person name="Huson D.H."/>
            <person name="Kravitz S.A."/>
            <person name="Mouchard L."/>
            <person name="Reinert K."/>
            <person name="Remington K.A."/>
            <person name="Clark A.G."/>
            <person name="Waterman M.S."/>
            <person name="Eichler E.E."/>
            <person name="Adams M.D."/>
            <person name="Hunkapiller M.W."/>
            <person name="Myers E.W."/>
            <person name="Venter J.C."/>
        </authorList>
    </citation>
    <scope>NUCLEOTIDE SEQUENCE [LARGE SCALE GENOMIC DNA]</scope>
</reference>
<reference key="4">
    <citation type="journal article" date="2004" name="Genome Res.">
        <title>The status, quality, and expansion of the NIH full-length cDNA project: the Mammalian Gene Collection (MGC).</title>
        <authorList>
            <consortium name="The MGC Project Team"/>
        </authorList>
    </citation>
    <scope>NUCLEOTIDE SEQUENCE [LARGE SCALE MRNA]</scope>
    <source>
        <tissue>Lung</tissue>
    </source>
</reference>
<reference key="5">
    <citation type="journal article" date="2009" name="Proc. Natl. Acad. Sci. U.S.A.">
        <title>Global profiling of protease cleavage sites by chemoselective labeling of protein N-termini.</title>
        <authorList>
            <person name="Xu G."/>
            <person name="Shin S.B."/>
            <person name="Jaffrey S.R."/>
        </authorList>
    </citation>
    <scope>PROTEIN SEQUENCE [LARGE SCALE ANALYSIS] OF 2-12</scope>
    <source>
        <tissue>Leukemic T-cell</tissue>
    </source>
</reference>
<reference key="6">
    <citation type="journal article" date="2011" name="BMC Syst. Biol.">
        <title>Initial characterization of the human central proteome.</title>
        <authorList>
            <person name="Burkard T.R."/>
            <person name="Planyavsky M."/>
            <person name="Kaupe I."/>
            <person name="Breitwieser F.P."/>
            <person name="Buerckstuemmer T."/>
            <person name="Bennett K.L."/>
            <person name="Superti-Furga G."/>
            <person name="Colinge J."/>
        </authorList>
    </citation>
    <scope>IDENTIFICATION BY MASS SPECTROMETRY [LARGE SCALE ANALYSIS]</scope>
</reference>
<reference key="7">
    <citation type="journal article" date="2014" name="Nat. Struct. Mol. Biol.">
        <title>Uncovering global SUMOylation signaling networks in a site-specific manner.</title>
        <authorList>
            <person name="Hendriks I.A."/>
            <person name="D'Souza R.C."/>
            <person name="Yang B."/>
            <person name="Verlaan-de Vries M."/>
            <person name="Mann M."/>
            <person name="Vertegaal A.C."/>
        </authorList>
    </citation>
    <scope>SUMOYLATION [LARGE SCALE ANALYSIS] AT LYS-136</scope>
    <scope>IDENTIFICATION BY MASS SPECTROMETRY [LARGE SCALE ANALYSIS]</scope>
</reference>
<reference key="8">
    <citation type="journal article" date="2017" name="Nat. Struct. Mol. Biol.">
        <title>Site-specific mapping of the human SUMO proteome reveals co-modification with phosphorylation.</title>
        <authorList>
            <person name="Hendriks I.A."/>
            <person name="Lyon D."/>
            <person name="Young C."/>
            <person name="Jensen L.J."/>
            <person name="Vertegaal A.C."/>
            <person name="Nielsen M.L."/>
        </authorList>
    </citation>
    <scope>SUMOYLATION [LARGE SCALE ANALYSIS] AT LYS-136 AND LYS-142</scope>
    <scope>IDENTIFICATION BY MASS SPECTROMETRY [LARGE SCALE ANALYSIS]</scope>
</reference>
<accession>Q9UNX3</accession>
<accession>B3KY82</accession>
<accession>D3DQM0</accession>
<gene>
    <name type="primary">RPL26L1</name>
    <name type="synonym">RPL26P1</name>
</gene>
<dbReference type="EMBL" id="AF083248">
    <property type="protein sequence ID" value="AAD39846.1"/>
    <property type="molecule type" value="mRNA"/>
</dbReference>
<dbReference type="EMBL" id="AK128872">
    <property type="protein sequence ID" value="BAG54744.1"/>
    <property type="molecule type" value="mRNA"/>
</dbReference>
<dbReference type="EMBL" id="CH471062">
    <property type="protein sequence ID" value="EAW61420.1"/>
    <property type="molecule type" value="Genomic_DNA"/>
</dbReference>
<dbReference type="EMBL" id="CH471062">
    <property type="protein sequence ID" value="EAW61421.1"/>
    <property type="molecule type" value="Genomic_DNA"/>
</dbReference>
<dbReference type="EMBL" id="BC017360">
    <property type="protein sequence ID" value="AAH17360.1"/>
    <property type="molecule type" value="mRNA"/>
</dbReference>
<dbReference type="EMBL" id="BC070192">
    <property type="protein sequence ID" value="AAH70192.1"/>
    <property type="molecule type" value="mRNA"/>
</dbReference>
<dbReference type="CCDS" id="CCDS4382.1"/>
<dbReference type="RefSeq" id="NP_001304909.1">
    <property type="nucleotide sequence ID" value="NM_001317980.2"/>
</dbReference>
<dbReference type="RefSeq" id="NP_001304910.1">
    <property type="nucleotide sequence ID" value="NM_001317981.2"/>
</dbReference>
<dbReference type="RefSeq" id="NP_001304911.1">
    <property type="nucleotide sequence ID" value="NM_001317982.2"/>
</dbReference>
<dbReference type="RefSeq" id="NP_057177.1">
    <property type="nucleotide sequence ID" value="NM_016093.4"/>
</dbReference>
<dbReference type="RefSeq" id="XP_011532867.1">
    <property type="nucleotide sequence ID" value="XM_011534565.3"/>
</dbReference>
<dbReference type="RefSeq" id="XP_016865008.1">
    <property type="nucleotide sequence ID" value="XM_017009519.3"/>
</dbReference>
<dbReference type="RefSeq" id="XP_016865009.1">
    <property type="nucleotide sequence ID" value="XM_017009520.2"/>
</dbReference>
<dbReference type="RefSeq" id="XP_054208685.1">
    <property type="nucleotide sequence ID" value="XM_054352710.1"/>
</dbReference>
<dbReference type="RefSeq" id="XP_054208686.1">
    <property type="nucleotide sequence ID" value="XM_054352711.1"/>
</dbReference>
<dbReference type="RefSeq" id="XP_054208687.1">
    <property type="nucleotide sequence ID" value="XM_054352712.1"/>
</dbReference>
<dbReference type="SMR" id="Q9UNX3"/>
<dbReference type="BioGRID" id="119308">
    <property type="interactions" value="488"/>
</dbReference>
<dbReference type="ComplexPortal" id="CPX-5183">
    <property type="entry name" value="60S cytosolic large ribosomal subunit"/>
</dbReference>
<dbReference type="ComplexPortal" id="CPX-7664">
    <property type="entry name" value="60S cytosolic large ribosomal subunit, testis-specific variant"/>
</dbReference>
<dbReference type="ComplexPortal" id="CPX-7665">
    <property type="entry name" value="60S cytosolic large ribosomal subunit, striated muscle variant"/>
</dbReference>
<dbReference type="FunCoup" id="Q9UNX3">
    <property type="interactions" value="1571"/>
</dbReference>
<dbReference type="IntAct" id="Q9UNX3">
    <property type="interactions" value="142"/>
</dbReference>
<dbReference type="MINT" id="Q9UNX3"/>
<dbReference type="STRING" id="9606.ENSP00000428223"/>
<dbReference type="DrugBank" id="DB02494">
    <property type="generic name" value="(S)-3-phenyllactic acid"/>
</dbReference>
<dbReference type="DrugBank" id="DB07374">
    <property type="generic name" value="Anisomycin"/>
</dbReference>
<dbReference type="DrugBank" id="DB08437">
    <property type="generic name" value="Puromycin"/>
</dbReference>
<dbReference type="GlyGen" id="Q9UNX3">
    <property type="glycosylation" value="1 site, 1 O-linked glycan (1 site)"/>
</dbReference>
<dbReference type="iPTMnet" id="Q9UNX3"/>
<dbReference type="PhosphoSitePlus" id="Q9UNX3"/>
<dbReference type="BioMuta" id="RPL26L1"/>
<dbReference type="DMDM" id="23396835"/>
<dbReference type="jPOST" id="Q9UNX3"/>
<dbReference type="MassIVE" id="Q9UNX3"/>
<dbReference type="PaxDb" id="9606-ENSP00000428223"/>
<dbReference type="PeptideAtlas" id="Q9UNX3"/>
<dbReference type="ProteomicsDB" id="85339"/>
<dbReference type="Pumba" id="Q9UNX3"/>
<dbReference type="TopDownProteomics" id="Q9UNX3"/>
<dbReference type="Antibodypedia" id="28927">
    <property type="antibodies" value="147 antibodies from 27 providers"/>
</dbReference>
<dbReference type="DNASU" id="51121"/>
<dbReference type="Ensembl" id="ENST00000265100.6">
    <property type="protein sequence ID" value="ENSP00000265100.2"/>
    <property type="gene ID" value="ENSG00000037241.7"/>
</dbReference>
<dbReference type="Ensembl" id="ENST00000519239.5">
    <property type="protein sequence ID" value="ENSP00000430147.1"/>
    <property type="gene ID" value="ENSG00000037241.7"/>
</dbReference>
<dbReference type="Ensembl" id="ENST00000519974.5">
    <property type="protein sequence ID" value="ENSP00000428177.1"/>
    <property type="gene ID" value="ENSG00000037241.7"/>
</dbReference>
<dbReference type="Ensembl" id="ENST00000521476.5">
    <property type="protein sequence ID" value="ENSP00000428223.1"/>
    <property type="gene ID" value="ENSG00000037241.7"/>
</dbReference>
<dbReference type="GeneID" id="51121"/>
<dbReference type="KEGG" id="hsa:51121"/>
<dbReference type="MANE-Select" id="ENST00000265100.6">
    <property type="protein sequence ID" value="ENSP00000265100.2"/>
    <property type="RefSeq nucleotide sequence ID" value="NM_016093.4"/>
    <property type="RefSeq protein sequence ID" value="NP_057177.1"/>
</dbReference>
<dbReference type="UCSC" id="uc003mcc.4">
    <property type="organism name" value="human"/>
</dbReference>
<dbReference type="AGR" id="HGNC:17050"/>
<dbReference type="CTD" id="51121"/>
<dbReference type="DisGeNET" id="51121"/>
<dbReference type="GeneCards" id="RPL26L1"/>
<dbReference type="HGNC" id="HGNC:17050">
    <property type="gene designation" value="RPL26L1"/>
</dbReference>
<dbReference type="HPA" id="ENSG00000037241">
    <property type="expression patterns" value="Low tissue specificity"/>
</dbReference>
<dbReference type="neXtProt" id="NX_Q9UNX3"/>
<dbReference type="OpenTargets" id="ENSG00000037241"/>
<dbReference type="PharmGKB" id="PA34706"/>
<dbReference type="VEuPathDB" id="HostDB:ENSG00000037241"/>
<dbReference type="eggNOG" id="KOG3401">
    <property type="taxonomic scope" value="Eukaryota"/>
</dbReference>
<dbReference type="GeneTree" id="ENSGT00390000014165"/>
<dbReference type="InParanoid" id="Q9UNX3"/>
<dbReference type="OMA" id="WIIHVER"/>
<dbReference type="OrthoDB" id="9529388at2759"/>
<dbReference type="PAN-GO" id="Q9UNX3">
    <property type="GO annotations" value="5 GO annotations based on evolutionary models"/>
</dbReference>
<dbReference type="PhylomeDB" id="Q9UNX3"/>
<dbReference type="TreeFam" id="TF300236"/>
<dbReference type="PathwayCommons" id="Q9UNX3"/>
<dbReference type="Reactome" id="R-HSA-156827">
    <property type="pathway name" value="L13a-mediated translational silencing of Ceruloplasmin expression"/>
</dbReference>
<dbReference type="Reactome" id="R-HSA-156902">
    <property type="pathway name" value="Peptide chain elongation"/>
</dbReference>
<dbReference type="Reactome" id="R-HSA-1799339">
    <property type="pathway name" value="SRP-dependent cotranslational protein targeting to membrane"/>
</dbReference>
<dbReference type="Reactome" id="R-HSA-192823">
    <property type="pathway name" value="Viral mRNA Translation"/>
</dbReference>
<dbReference type="Reactome" id="R-HSA-2408557">
    <property type="pathway name" value="Selenocysteine synthesis"/>
</dbReference>
<dbReference type="Reactome" id="R-HSA-6791226">
    <property type="pathway name" value="Major pathway of rRNA processing in the nucleolus and cytosol"/>
</dbReference>
<dbReference type="Reactome" id="R-HSA-72689">
    <property type="pathway name" value="Formation of a pool of free 40S subunits"/>
</dbReference>
<dbReference type="Reactome" id="R-HSA-72706">
    <property type="pathway name" value="GTP hydrolysis and joining of the 60S ribosomal subunit"/>
</dbReference>
<dbReference type="Reactome" id="R-HSA-72764">
    <property type="pathway name" value="Eukaryotic Translation Termination"/>
</dbReference>
<dbReference type="Reactome" id="R-HSA-9010553">
    <property type="pathway name" value="Regulation of expression of SLITs and ROBOs"/>
</dbReference>
<dbReference type="Reactome" id="R-HSA-9633012">
    <property type="pathway name" value="Response of EIF2AK4 (GCN2) to amino acid deficiency"/>
</dbReference>
<dbReference type="Reactome" id="R-HSA-975956">
    <property type="pathway name" value="Nonsense Mediated Decay (NMD) independent of the Exon Junction Complex (EJC)"/>
</dbReference>
<dbReference type="Reactome" id="R-HSA-975957">
    <property type="pathway name" value="Nonsense Mediated Decay (NMD) enhanced by the Exon Junction Complex (EJC)"/>
</dbReference>
<dbReference type="SignaLink" id="Q9UNX3"/>
<dbReference type="SIGNOR" id="Q9UNX3"/>
<dbReference type="BioGRID-ORCS" id="51121">
    <property type="hits" value="114 hits in 1152 CRISPR screens"/>
</dbReference>
<dbReference type="CD-CODE" id="91857CE7">
    <property type="entry name" value="Nucleolus"/>
</dbReference>
<dbReference type="ChiTaRS" id="RPL26L1">
    <property type="organism name" value="human"/>
</dbReference>
<dbReference type="GenomeRNAi" id="51121"/>
<dbReference type="Pharos" id="Q9UNX3">
    <property type="development level" value="Tdark"/>
</dbReference>
<dbReference type="PRO" id="PR:Q9UNX3"/>
<dbReference type="Proteomes" id="UP000005640">
    <property type="component" value="Chromosome 5"/>
</dbReference>
<dbReference type="RNAct" id="Q9UNX3">
    <property type="molecule type" value="protein"/>
</dbReference>
<dbReference type="Bgee" id="ENSG00000037241">
    <property type="expression patterns" value="Expressed in left testis and 102 other cell types or tissues"/>
</dbReference>
<dbReference type="ExpressionAtlas" id="Q9UNX3">
    <property type="expression patterns" value="baseline and differential"/>
</dbReference>
<dbReference type="GO" id="GO:0022625">
    <property type="term" value="C:cytosolic large ribosomal subunit"/>
    <property type="evidence" value="ECO:0000318"/>
    <property type="project" value="GO_Central"/>
</dbReference>
<dbReference type="GO" id="GO:0070062">
    <property type="term" value="C:extracellular exosome"/>
    <property type="evidence" value="ECO:0007005"/>
    <property type="project" value="UniProtKB"/>
</dbReference>
<dbReference type="GO" id="GO:0003723">
    <property type="term" value="F:RNA binding"/>
    <property type="evidence" value="ECO:0000318"/>
    <property type="project" value="GO_Central"/>
</dbReference>
<dbReference type="GO" id="GO:0003735">
    <property type="term" value="F:structural constituent of ribosome"/>
    <property type="evidence" value="ECO:0000318"/>
    <property type="project" value="GO_Central"/>
</dbReference>
<dbReference type="GO" id="GO:0002181">
    <property type="term" value="P:cytoplasmic translation"/>
    <property type="evidence" value="ECO:0000318"/>
    <property type="project" value="GO_Central"/>
</dbReference>
<dbReference type="GO" id="GO:0042273">
    <property type="term" value="P:ribosomal large subunit biogenesis"/>
    <property type="evidence" value="ECO:0000318"/>
    <property type="project" value="GO_Central"/>
</dbReference>
<dbReference type="CDD" id="cd06089">
    <property type="entry name" value="KOW_RPL26"/>
    <property type="match status" value="1"/>
</dbReference>
<dbReference type="FunFam" id="2.30.30.30:FF:000009">
    <property type="entry name" value="60S ribosomal protein L26"/>
    <property type="match status" value="1"/>
</dbReference>
<dbReference type="Gene3D" id="2.30.30.30">
    <property type="match status" value="1"/>
</dbReference>
<dbReference type="HAMAP" id="MF_01326_A">
    <property type="entry name" value="Ribosomal_uL24_A"/>
    <property type="match status" value="1"/>
</dbReference>
<dbReference type="InterPro" id="IPR005824">
    <property type="entry name" value="KOW"/>
</dbReference>
<dbReference type="InterPro" id="IPR014722">
    <property type="entry name" value="Rib_uL2_dom2"/>
</dbReference>
<dbReference type="InterPro" id="IPR005825">
    <property type="entry name" value="Ribosomal_uL24_CS"/>
</dbReference>
<dbReference type="InterPro" id="IPR005756">
    <property type="entry name" value="Ribosomal_uL24_euk/arc"/>
</dbReference>
<dbReference type="InterPro" id="IPR041988">
    <property type="entry name" value="Ribosomal_uL24_KOW"/>
</dbReference>
<dbReference type="InterPro" id="IPR008991">
    <property type="entry name" value="Translation_prot_SH3-like_sf"/>
</dbReference>
<dbReference type="NCBIfam" id="TIGR01080">
    <property type="entry name" value="rplX_A_E"/>
    <property type="match status" value="1"/>
</dbReference>
<dbReference type="PANTHER" id="PTHR11143">
    <property type="entry name" value="60S RIBOSOMAL PROTEIN L26 FAMILY MEMBER"/>
    <property type="match status" value="1"/>
</dbReference>
<dbReference type="Pfam" id="PF00467">
    <property type="entry name" value="KOW"/>
    <property type="match status" value="1"/>
</dbReference>
<dbReference type="Pfam" id="PF16906">
    <property type="entry name" value="Ribosomal_L26"/>
    <property type="match status" value="1"/>
</dbReference>
<dbReference type="SMART" id="SM00739">
    <property type="entry name" value="KOW"/>
    <property type="match status" value="1"/>
</dbReference>
<dbReference type="SUPFAM" id="SSF50104">
    <property type="entry name" value="Translation proteins SH3-like domain"/>
    <property type="match status" value="1"/>
</dbReference>
<dbReference type="PROSITE" id="PS01108">
    <property type="entry name" value="RIBOSOMAL_L24"/>
    <property type="match status" value="1"/>
</dbReference>
<organism>
    <name type="scientific">Homo sapiens</name>
    <name type="common">Human</name>
    <dbReference type="NCBI Taxonomy" id="9606"/>
    <lineage>
        <taxon>Eukaryota</taxon>
        <taxon>Metazoa</taxon>
        <taxon>Chordata</taxon>
        <taxon>Craniata</taxon>
        <taxon>Vertebrata</taxon>
        <taxon>Euteleostomi</taxon>
        <taxon>Mammalia</taxon>
        <taxon>Eutheria</taxon>
        <taxon>Euarchontoglires</taxon>
        <taxon>Primates</taxon>
        <taxon>Haplorrhini</taxon>
        <taxon>Catarrhini</taxon>
        <taxon>Hominidae</taxon>
        <taxon>Homo</taxon>
    </lineage>
</organism>
<evidence type="ECO:0000256" key="1">
    <source>
        <dbReference type="SAM" id="MobiDB-lite"/>
    </source>
</evidence>
<evidence type="ECO:0000305" key="2"/>
<evidence type="ECO:0007744" key="3">
    <source>
    </source>
</evidence>
<evidence type="ECO:0007744" key="4">
    <source>
    </source>
</evidence>
<name>RL26L_HUMAN</name>
<feature type="chain" id="PRO_0000130791" description="Ribosomal protein uL24-like">
    <location>
        <begin position="1"/>
        <end position="145"/>
    </location>
</feature>
<feature type="region of interest" description="Disordered" evidence="1">
    <location>
        <begin position="1"/>
        <end position="21"/>
    </location>
</feature>
<feature type="region of interest" description="Disordered" evidence="1">
    <location>
        <begin position="122"/>
        <end position="145"/>
    </location>
</feature>
<feature type="cross-link" description="Glycyl lysine isopeptide (Lys-Gly) (interchain with G-Cter in SUMO2)" evidence="3 4">
    <location>
        <position position="136"/>
    </location>
</feature>
<feature type="cross-link" description="Glycyl lysine isopeptide (Lys-Gly) (interchain with G-Cter in SUMO2)" evidence="4">
    <location>
        <position position="142"/>
    </location>
</feature>